<protein>
    <recommendedName>
        <fullName evidence="1">NH(3)-dependent NAD(+) synthetase</fullName>
        <ecNumber evidence="1">6.3.1.5</ecNumber>
    </recommendedName>
</protein>
<sequence length="244" mass="27337">MELKEYLDYLVEFIKETVKKANAKGVVIGISGGIDSAVVACLAKKAFPNDYTAVWMPIESSDEDYKCKQELIDQCGIKAIDVELKETFLSFKKAIKDSTTPEHKLAIANAKARLRMTTLYTVAQTNSYLVLGTDNLDEWHIGYFTKFGDGGVDMVPLVHLLKREVREAARILGVPTSIINRAPTASLWEDQTDESELGITYDQIDAYLAGEINDENVKSRVDHLHKISEHKRNGAVAPKEFKRK</sequence>
<name>NADE_MESFL</name>
<dbReference type="EC" id="6.3.1.5" evidence="1"/>
<dbReference type="EMBL" id="AE017263">
    <property type="protein sequence ID" value="AAT75879.1"/>
    <property type="molecule type" value="Genomic_DNA"/>
</dbReference>
<dbReference type="RefSeq" id="WP_011183419.1">
    <property type="nucleotide sequence ID" value="NC_006055.1"/>
</dbReference>
<dbReference type="RefSeq" id="YP_053763.1">
    <property type="nucleotide sequence ID" value="NC_006055.1"/>
</dbReference>
<dbReference type="SMR" id="Q6F0U4"/>
<dbReference type="STRING" id="265311.Mfl521"/>
<dbReference type="PaxDb" id="265311-Mfl521"/>
<dbReference type="EnsemblBacteria" id="AAT75879">
    <property type="protein sequence ID" value="AAT75879"/>
    <property type="gene ID" value="Mfl521"/>
</dbReference>
<dbReference type="GeneID" id="2898091"/>
<dbReference type="KEGG" id="mfl:Mfl521"/>
<dbReference type="PATRIC" id="fig|265311.5.peg.525"/>
<dbReference type="eggNOG" id="COG0171">
    <property type="taxonomic scope" value="Bacteria"/>
</dbReference>
<dbReference type="HOGENOM" id="CLU_059327_1_1_14"/>
<dbReference type="OrthoDB" id="9803818at2"/>
<dbReference type="UniPathway" id="UPA00253">
    <property type="reaction ID" value="UER00333"/>
</dbReference>
<dbReference type="Proteomes" id="UP000006647">
    <property type="component" value="Chromosome"/>
</dbReference>
<dbReference type="GO" id="GO:0005737">
    <property type="term" value="C:cytoplasm"/>
    <property type="evidence" value="ECO:0007669"/>
    <property type="project" value="InterPro"/>
</dbReference>
<dbReference type="GO" id="GO:0005524">
    <property type="term" value="F:ATP binding"/>
    <property type="evidence" value="ECO:0007669"/>
    <property type="project" value="UniProtKB-UniRule"/>
</dbReference>
<dbReference type="GO" id="GO:0004359">
    <property type="term" value="F:glutaminase activity"/>
    <property type="evidence" value="ECO:0007669"/>
    <property type="project" value="InterPro"/>
</dbReference>
<dbReference type="GO" id="GO:0046872">
    <property type="term" value="F:metal ion binding"/>
    <property type="evidence" value="ECO:0007669"/>
    <property type="project" value="UniProtKB-KW"/>
</dbReference>
<dbReference type="GO" id="GO:0003952">
    <property type="term" value="F:NAD+ synthase (glutamine-hydrolyzing) activity"/>
    <property type="evidence" value="ECO:0007669"/>
    <property type="project" value="InterPro"/>
</dbReference>
<dbReference type="GO" id="GO:0008795">
    <property type="term" value="F:NAD+ synthase activity"/>
    <property type="evidence" value="ECO:0007669"/>
    <property type="project" value="UniProtKB-UniRule"/>
</dbReference>
<dbReference type="GO" id="GO:0009435">
    <property type="term" value="P:NAD biosynthetic process"/>
    <property type="evidence" value="ECO:0007669"/>
    <property type="project" value="UniProtKB-UniRule"/>
</dbReference>
<dbReference type="CDD" id="cd00553">
    <property type="entry name" value="NAD_synthase"/>
    <property type="match status" value="1"/>
</dbReference>
<dbReference type="Gene3D" id="3.40.50.620">
    <property type="entry name" value="HUPs"/>
    <property type="match status" value="1"/>
</dbReference>
<dbReference type="HAMAP" id="MF_00193">
    <property type="entry name" value="NadE_ammonia_dep"/>
    <property type="match status" value="1"/>
</dbReference>
<dbReference type="InterPro" id="IPR022310">
    <property type="entry name" value="NAD/GMP_synthase"/>
</dbReference>
<dbReference type="InterPro" id="IPR003694">
    <property type="entry name" value="NAD_synthase"/>
</dbReference>
<dbReference type="InterPro" id="IPR022926">
    <property type="entry name" value="NH(3)-dep_NAD(+)_synth"/>
</dbReference>
<dbReference type="InterPro" id="IPR014729">
    <property type="entry name" value="Rossmann-like_a/b/a_fold"/>
</dbReference>
<dbReference type="NCBIfam" id="TIGR00552">
    <property type="entry name" value="nadE"/>
    <property type="match status" value="1"/>
</dbReference>
<dbReference type="PANTHER" id="PTHR23090">
    <property type="entry name" value="NH 3 /GLUTAMINE-DEPENDENT NAD + SYNTHETASE"/>
    <property type="match status" value="1"/>
</dbReference>
<dbReference type="PANTHER" id="PTHR23090:SF7">
    <property type="entry name" value="NH(3)-DEPENDENT NAD(+) SYNTHETASE"/>
    <property type="match status" value="1"/>
</dbReference>
<dbReference type="Pfam" id="PF02540">
    <property type="entry name" value="NAD_synthase"/>
    <property type="match status" value="1"/>
</dbReference>
<dbReference type="SUPFAM" id="SSF52402">
    <property type="entry name" value="Adenine nucleotide alpha hydrolases-like"/>
    <property type="match status" value="1"/>
</dbReference>
<comment type="function">
    <text evidence="1">Catalyzes the ATP-dependent amidation of deamido-NAD to form NAD. Uses ammonia as a nitrogen source.</text>
</comment>
<comment type="catalytic activity">
    <reaction evidence="1">
        <text>deamido-NAD(+) + NH4(+) + ATP = AMP + diphosphate + NAD(+) + H(+)</text>
        <dbReference type="Rhea" id="RHEA:21188"/>
        <dbReference type="ChEBI" id="CHEBI:15378"/>
        <dbReference type="ChEBI" id="CHEBI:28938"/>
        <dbReference type="ChEBI" id="CHEBI:30616"/>
        <dbReference type="ChEBI" id="CHEBI:33019"/>
        <dbReference type="ChEBI" id="CHEBI:57540"/>
        <dbReference type="ChEBI" id="CHEBI:58437"/>
        <dbReference type="ChEBI" id="CHEBI:456215"/>
        <dbReference type="EC" id="6.3.1.5"/>
    </reaction>
</comment>
<comment type="pathway">
    <text evidence="1">Cofactor biosynthesis; NAD(+) biosynthesis; NAD(+) from deamido-NAD(+) (ammonia route): step 1/1.</text>
</comment>
<comment type="subunit">
    <text evidence="1">Homodimer.</text>
</comment>
<comment type="similarity">
    <text evidence="1">Belongs to the NAD synthetase family.</text>
</comment>
<evidence type="ECO:0000255" key="1">
    <source>
        <dbReference type="HAMAP-Rule" id="MF_00193"/>
    </source>
</evidence>
<keyword id="KW-0067">ATP-binding</keyword>
<keyword id="KW-0436">Ligase</keyword>
<keyword id="KW-0460">Magnesium</keyword>
<keyword id="KW-0479">Metal-binding</keyword>
<keyword id="KW-0520">NAD</keyword>
<keyword id="KW-0547">Nucleotide-binding</keyword>
<keyword id="KW-1185">Reference proteome</keyword>
<reference key="1">
    <citation type="submission" date="2004-06" db="EMBL/GenBank/DDBJ databases">
        <authorList>
            <person name="Birren B.W."/>
            <person name="Stange-Thomann N."/>
            <person name="Hafez N."/>
            <person name="DeCaprio D."/>
            <person name="Fisher S."/>
            <person name="Butler J."/>
            <person name="Elkins T."/>
            <person name="Kodira C.D."/>
            <person name="Major J."/>
            <person name="Wang S."/>
            <person name="Nicol R."/>
            <person name="Nusbaum C."/>
        </authorList>
    </citation>
    <scope>NUCLEOTIDE SEQUENCE [LARGE SCALE GENOMIC DNA]</scope>
    <source>
        <strain>ATCC 33453 / NBRC 100688 / NCTC 11704 / L1</strain>
    </source>
</reference>
<organism>
    <name type="scientific">Mesoplasma florum (strain ATCC 33453 / NBRC 100688 / NCTC 11704 / L1)</name>
    <name type="common">Acholeplasma florum</name>
    <dbReference type="NCBI Taxonomy" id="265311"/>
    <lineage>
        <taxon>Bacteria</taxon>
        <taxon>Bacillati</taxon>
        <taxon>Mycoplasmatota</taxon>
        <taxon>Mollicutes</taxon>
        <taxon>Entomoplasmatales</taxon>
        <taxon>Entomoplasmataceae</taxon>
        <taxon>Mesoplasma</taxon>
    </lineage>
</organism>
<proteinExistence type="inferred from homology"/>
<accession>Q6F0U4</accession>
<feature type="chain" id="PRO_1000099032" description="NH(3)-dependent NAD(+) synthetase">
    <location>
        <begin position="1"/>
        <end position="244"/>
    </location>
</feature>
<feature type="binding site" evidence="1">
    <location>
        <begin position="29"/>
        <end position="36"/>
    </location>
    <ligand>
        <name>ATP</name>
        <dbReference type="ChEBI" id="CHEBI:30616"/>
    </ligand>
</feature>
<feature type="binding site" evidence="1">
    <location>
        <position position="35"/>
    </location>
    <ligand>
        <name>Mg(2+)</name>
        <dbReference type="ChEBI" id="CHEBI:18420"/>
    </ligand>
</feature>
<feature type="binding site" evidence="1">
    <location>
        <position position="113"/>
    </location>
    <ligand>
        <name>deamido-NAD(+)</name>
        <dbReference type="ChEBI" id="CHEBI:58437"/>
    </ligand>
</feature>
<feature type="binding site" evidence="1">
    <location>
        <position position="133"/>
    </location>
    <ligand>
        <name>ATP</name>
        <dbReference type="ChEBI" id="CHEBI:30616"/>
    </ligand>
</feature>
<feature type="binding site" evidence="1">
    <location>
        <position position="138"/>
    </location>
    <ligand>
        <name>Mg(2+)</name>
        <dbReference type="ChEBI" id="CHEBI:18420"/>
    </ligand>
</feature>
<feature type="binding site" evidence="1">
    <location>
        <position position="146"/>
    </location>
    <ligand>
        <name>deamido-NAD(+)</name>
        <dbReference type="ChEBI" id="CHEBI:58437"/>
    </ligand>
</feature>
<feature type="binding site" evidence="1">
    <location>
        <position position="153"/>
    </location>
    <ligand>
        <name>deamido-NAD(+)</name>
        <dbReference type="ChEBI" id="CHEBI:58437"/>
    </ligand>
</feature>
<feature type="binding site" evidence="1">
    <location>
        <position position="162"/>
    </location>
    <ligand>
        <name>ATP</name>
        <dbReference type="ChEBI" id="CHEBI:30616"/>
    </ligand>
</feature>
<feature type="binding site" evidence="1">
    <location>
        <position position="184"/>
    </location>
    <ligand>
        <name>ATP</name>
        <dbReference type="ChEBI" id="CHEBI:30616"/>
    </ligand>
</feature>
<feature type="binding site" evidence="1">
    <location>
        <begin position="230"/>
        <end position="231"/>
    </location>
    <ligand>
        <name>deamido-NAD(+)</name>
        <dbReference type="ChEBI" id="CHEBI:58437"/>
    </ligand>
</feature>
<gene>
    <name evidence="1" type="primary">nadE</name>
    <name type="ordered locus">Mfl521</name>
</gene>